<evidence type="ECO:0000250" key="1">
    <source>
        <dbReference type="UniProtKB" id="P14621"/>
    </source>
</evidence>
<evidence type="ECO:0000250" key="2">
    <source>
        <dbReference type="UniProtKB" id="P35745"/>
    </source>
</evidence>
<evidence type="ECO:0000255" key="3">
    <source>
        <dbReference type="PROSITE-ProRule" id="PRU00520"/>
    </source>
</evidence>
<evidence type="ECO:0000269" key="4">
    <source>
    </source>
</evidence>
<evidence type="ECO:0000305" key="5"/>
<reference key="1">
    <citation type="journal article" date="1986" name="Ital. J. Biochem.">
        <title>The complete amino acid sequence of bovine skeletal muscle acylphosphatase.</title>
        <authorList>
            <person name="Camici G."/>
            <person name="Manao G."/>
            <person name="Modesti A."/>
            <person name="Stefani M."/>
            <person name="Berti A."/>
            <person name="Cappugi G."/>
            <person name="Ramponi G."/>
        </authorList>
    </citation>
    <scope>PROTEIN SEQUENCE OF 2-99</scope>
    <scope>ACETYLATION AT SER-2</scope>
    <source>
        <tissue>Muscle</tissue>
    </source>
</reference>
<proteinExistence type="evidence at protein level"/>
<feature type="initiator methionine" description="Removed" evidence="1">
    <location>
        <position position="1"/>
    </location>
</feature>
<feature type="chain" id="PRO_0000158539" description="Acylphosphatase-2">
    <location>
        <begin position="2"/>
        <end position="99"/>
    </location>
</feature>
<feature type="domain" description="Acylphosphatase-like" evidence="3">
    <location>
        <begin position="9"/>
        <end position="99"/>
    </location>
</feature>
<feature type="active site" evidence="3">
    <location>
        <position position="24"/>
    </location>
</feature>
<feature type="active site" evidence="3">
    <location>
        <position position="42"/>
    </location>
</feature>
<feature type="modified residue" description="N-acetylserine" evidence="4">
    <location>
        <position position="2"/>
    </location>
</feature>
<feature type="modified residue" description="Phosphoserine" evidence="2">
    <location>
        <position position="93"/>
    </location>
</feature>
<organism>
    <name type="scientific">Bos taurus</name>
    <name type="common">Bovine</name>
    <dbReference type="NCBI Taxonomy" id="9913"/>
    <lineage>
        <taxon>Eukaryota</taxon>
        <taxon>Metazoa</taxon>
        <taxon>Chordata</taxon>
        <taxon>Craniata</taxon>
        <taxon>Vertebrata</taxon>
        <taxon>Euteleostomi</taxon>
        <taxon>Mammalia</taxon>
        <taxon>Eutheria</taxon>
        <taxon>Laurasiatheria</taxon>
        <taxon>Artiodactyla</taxon>
        <taxon>Ruminantia</taxon>
        <taxon>Pecora</taxon>
        <taxon>Bovidae</taxon>
        <taxon>Bovinae</taxon>
        <taxon>Bos</taxon>
    </lineage>
</organism>
<keyword id="KW-0007">Acetylation</keyword>
<keyword id="KW-0903">Direct protein sequencing</keyword>
<keyword id="KW-0378">Hydrolase</keyword>
<keyword id="KW-0597">Phosphoprotein</keyword>
<keyword id="KW-1185">Reference proteome</keyword>
<dbReference type="EC" id="3.6.1.7"/>
<dbReference type="PIR" id="A29578">
    <property type="entry name" value="QPBO"/>
</dbReference>
<dbReference type="RefSeq" id="NP_001106701.1">
    <property type="nucleotide sequence ID" value="NM_001113230.1"/>
</dbReference>
<dbReference type="SMR" id="P07033"/>
<dbReference type="FunCoup" id="P07033">
    <property type="interactions" value="355"/>
</dbReference>
<dbReference type="STRING" id="9913.ENSBTAP00000008994"/>
<dbReference type="iPTMnet" id="P07033"/>
<dbReference type="PaxDb" id="9913-ENSBTAP00000008994"/>
<dbReference type="GeneID" id="767889"/>
<dbReference type="KEGG" id="bta:767889"/>
<dbReference type="CTD" id="98"/>
<dbReference type="VEuPathDB" id="HostDB:ENSBTAG00000006852"/>
<dbReference type="eggNOG" id="KOG3360">
    <property type="taxonomic scope" value="Eukaryota"/>
</dbReference>
<dbReference type="HOGENOM" id="CLU_141932_0_1_1"/>
<dbReference type="InParanoid" id="P07033"/>
<dbReference type="OMA" id="HAIMAEN"/>
<dbReference type="OrthoDB" id="7961613at2759"/>
<dbReference type="TreeFam" id="TF300288"/>
<dbReference type="Proteomes" id="UP000009136">
    <property type="component" value="Chromosome 11"/>
</dbReference>
<dbReference type="Bgee" id="ENSBTAG00000006852">
    <property type="expression patterns" value="Expressed in semimembranosus muscle and 100 other cell types or tissues"/>
</dbReference>
<dbReference type="GO" id="GO:0003998">
    <property type="term" value="F:acylphosphatase activity"/>
    <property type="evidence" value="ECO:0000318"/>
    <property type="project" value="GO_Central"/>
</dbReference>
<dbReference type="FunFam" id="3.30.70.100:FF:000011">
    <property type="entry name" value="Acylphosphatase"/>
    <property type="match status" value="1"/>
</dbReference>
<dbReference type="Gene3D" id="3.30.70.100">
    <property type="match status" value="1"/>
</dbReference>
<dbReference type="InterPro" id="IPR020456">
    <property type="entry name" value="Acylphosphatase"/>
</dbReference>
<dbReference type="InterPro" id="IPR001792">
    <property type="entry name" value="Acylphosphatase-like_dom"/>
</dbReference>
<dbReference type="InterPro" id="IPR036046">
    <property type="entry name" value="Acylphosphatase-like_dom_sf"/>
</dbReference>
<dbReference type="InterPro" id="IPR017968">
    <property type="entry name" value="Acylphosphatase_CS"/>
</dbReference>
<dbReference type="PANTHER" id="PTHR10029">
    <property type="entry name" value="ACYLPHOSPHATASE"/>
    <property type="match status" value="1"/>
</dbReference>
<dbReference type="PANTHER" id="PTHR10029:SF20">
    <property type="entry name" value="ACYLPHOSPHATASE-2"/>
    <property type="match status" value="1"/>
</dbReference>
<dbReference type="Pfam" id="PF00708">
    <property type="entry name" value="Acylphosphatase"/>
    <property type="match status" value="1"/>
</dbReference>
<dbReference type="PRINTS" id="PR00112">
    <property type="entry name" value="ACYLPHPHTASE"/>
</dbReference>
<dbReference type="SUPFAM" id="SSF54975">
    <property type="entry name" value="Acylphosphatase/BLUF domain-like"/>
    <property type="match status" value="1"/>
</dbReference>
<dbReference type="PROSITE" id="PS00150">
    <property type="entry name" value="ACYLPHOSPHATASE_1"/>
    <property type="match status" value="1"/>
</dbReference>
<dbReference type="PROSITE" id="PS00151">
    <property type="entry name" value="ACYLPHOSPHATASE_2"/>
    <property type="match status" value="1"/>
</dbReference>
<dbReference type="PROSITE" id="PS51160">
    <property type="entry name" value="ACYLPHOSPHATASE_3"/>
    <property type="match status" value="1"/>
</dbReference>
<comment type="function">
    <text>Its physiological role is not yet clear.</text>
</comment>
<comment type="catalytic activity">
    <reaction>
        <text>an acyl phosphate + H2O = a carboxylate + phosphate + H(+)</text>
        <dbReference type="Rhea" id="RHEA:14965"/>
        <dbReference type="ChEBI" id="CHEBI:15377"/>
        <dbReference type="ChEBI" id="CHEBI:15378"/>
        <dbReference type="ChEBI" id="CHEBI:29067"/>
        <dbReference type="ChEBI" id="CHEBI:43474"/>
        <dbReference type="ChEBI" id="CHEBI:59918"/>
        <dbReference type="EC" id="3.6.1.7"/>
    </reaction>
</comment>
<comment type="similarity">
    <text evidence="5">Belongs to the acylphosphatase family.</text>
</comment>
<name>ACYP2_BOVIN</name>
<sequence length="99" mass="11178">MSTGRPLKSVDYEVFGRVQGVCFRMYTEDEARKIGVVGWVKNTSKGTVTGQVQGPEEKVNSMKSWLSKVGSPSSRIDRTNFSNEKTISKLEYSSFNIRY</sequence>
<gene>
    <name type="primary">ACYP2</name>
    <name type="synonym">ACYP</name>
</gene>
<accession>P07033</accession>
<protein>
    <recommendedName>
        <fullName>Acylphosphatase-2</fullName>
        <ecNumber>3.6.1.7</ecNumber>
    </recommendedName>
    <alternativeName>
        <fullName>Acylphosphatase, muscle type isozyme</fullName>
    </alternativeName>
    <alternativeName>
        <fullName>Acylphosphate phosphohydrolase 2</fullName>
    </alternativeName>
</protein>